<comment type="function">
    <text evidence="1">Nucleoside triphosphate pyrophosphatase that hydrolyzes 7-methyl-GTP (m(7)GTP). May have a dual role in cell division arrest and in preventing the incorporation of modified nucleotides into cellular nucleic acids.</text>
</comment>
<comment type="catalytic activity">
    <reaction evidence="1">
        <text>N(7)-methyl-GTP + H2O = N(7)-methyl-GMP + diphosphate + H(+)</text>
        <dbReference type="Rhea" id="RHEA:58744"/>
        <dbReference type="ChEBI" id="CHEBI:15377"/>
        <dbReference type="ChEBI" id="CHEBI:15378"/>
        <dbReference type="ChEBI" id="CHEBI:33019"/>
        <dbReference type="ChEBI" id="CHEBI:58285"/>
        <dbReference type="ChEBI" id="CHEBI:87133"/>
    </reaction>
</comment>
<comment type="cofactor">
    <cofactor evidence="1">
        <name>a divalent metal cation</name>
        <dbReference type="ChEBI" id="CHEBI:60240"/>
    </cofactor>
</comment>
<comment type="subcellular location">
    <subcellularLocation>
        <location evidence="1">Cytoplasm</location>
    </subcellularLocation>
</comment>
<comment type="similarity">
    <text evidence="1">Belongs to the Maf family. YceF subfamily.</text>
</comment>
<keyword id="KW-0963">Cytoplasm</keyword>
<keyword id="KW-0378">Hydrolase</keyword>
<keyword id="KW-0546">Nucleotide metabolism</keyword>
<keyword id="KW-1185">Reference proteome</keyword>
<name>NTPPB_CHRSD</name>
<protein>
    <recommendedName>
        <fullName evidence="1">7-methyl-GTP pyrophosphatase</fullName>
        <shortName evidence="1">m(7)GTP pyrophosphatase</shortName>
        <ecNumber evidence="1">3.6.1.-</ecNumber>
    </recommendedName>
</protein>
<feature type="chain" id="PRO_0000267283" description="7-methyl-GTP pyrophosphatase">
    <location>
        <begin position="1"/>
        <end position="193"/>
    </location>
</feature>
<feature type="active site" description="Proton acceptor" evidence="1">
    <location>
        <position position="69"/>
    </location>
</feature>
<feature type="site" description="Important for substrate specificity" evidence="1">
    <location>
        <position position="12"/>
    </location>
</feature>
<feature type="site" description="Important for substrate specificity" evidence="1">
    <location>
        <position position="70"/>
    </location>
</feature>
<feature type="site" description="Important for substrate specificity" evidence="1">
    <location>
        <position position="154"/>
    </location>
</feature>
<organism>
    <name type="scientific">Chromohalobacter salexigens (strain ATCC BAA-138 / DSM 3043 / CIP 106854 / NCIMB 13768 / 1H11)</name>
    <dbReference type="NCBI Taxonomy" id="290398"/>
    <lineage>
        <taxon>Bacteria</taxon>
        <taxon>Pseudomonadati</taxon>
        <taxon>Pseudomonadota</taxon>
        <taxon>Gammaproteobacteria</taxon>
        <taxon>Oceanospirillales</taxon>
        <taxon>Halomonadaceae</taxon>
        <taxon>Chromohalobacter</taxon>
    </lineage>
</organism>
<reference key="1">
    <citation type="journal article" date="2011" name="Stand. Genomic Sci.">
        <title>Complete genome sequence of the halophilic and highly halotolerant Chromohalobacter salexigens type strain (1H11(T)).</title>
        <authorList>
            <person name="Copeland A."/>
            <person name="O'Connor K."/>
            <person name="Lucas S."/>
            <person name="Lapidus A."/>
            <person name="Berry K.W."/>
            <person name="Detter J.C."/>
            <person name="Del Rio T.G."/>
            <person name="Hammon N."/>
            <person name="Dalin E."/>
            <person name="Tice H."/>
            <person name="Pitluck S."/>
            <person name="Bruce D."/>
            <person name="Goodwin L."/>
            <person name="Han C."/>
            <person name="Tapia R."/>
            <person name="Saunders E."/>
            <person name="Schmutz J."/>
            <person name="Brettin T."/>
            <person name="Larimer F."/>
            <person name="Land M."/>
            <person name="Hauser L."/>
            <person name="Vargas C."/>
            <person name="Nieto J.J."/>
            <person name="Kyrpides N.C."/>
            <person name="Ivanova N."/>
            <person name="Goker M."/>
            <person name="Klenk H.P."/>
            <person name="Csonka L.N."/>
            <person name="Woyke T."/>
        </authorList>
    </citation>
    <scope>NUCLEOTIDE SEQUENCE [LARGE SCALE GENOMIC DNA]</scope>
    <source>
        <strain>ATCC BAA-138 / DSM 3043 / CIP 106854 / NCIMB 13768 / 1H11</strain>
    </source>
</reference>
<accession>Q1QX59</accession>
<proteinExistence type="inferred from homology"/>
<gene>
    <name type="ordered locus">Csal_1596</name>
</gene>
<sequence length="193" mass="21672">MTRLVLASGSRWRRQLLDRLELPYAWAAPDIDETPHPRESPQALVHRLALGKATALAGEYPDHLIIGSDQVCLFDDQILGKPGDAATARANLQRFSGQRVRFLTGIAVIDTAHARHWVDHERYDVIFRDLSETEIAHYVDREQPLDSAGSFRMEGLGITLFERLEGRDPNTLIGLPLIRLCEMLREAGLDPLG</sequence>
<dbReference type="EC" id="3.6.1.-" evidence="1"/>
<dbReference type="EMBL" id="CP000285">
    <property type="protein sequence ID" value="ABE58949.1"/>
    <property type="molecule type" value="Genomic_DNA"/>
</dbReference>
<dbReference type="RefSeq" id="WP_011506895.1">
    <property type="nucleotide sequence ID" value="NC_007963.1"/>
</dbReference>
<dbReference type="SMR" id="Q1QX59"/>
<dbReference type="STRING" id="290398.Csal_1596"/>
<dbReference type="GeneID" id="95334327"/>
<dbReference type="KEGG" id="csa:Csal_1596"/>
<dbReference type="eggNOG" id="COG0424">
    <property type="taxonomic scope" value="Bacteria"/>
</dbReference>
<dbReference type="HOGENOM" id="CLU_040416_1_0_6"/>
<dbReference type="OrthoDB" id="9813694at2"/>
<dbReference type="Proteomes" id="UP000000239">
    <property type="component" value="Chromosome"/>
</dbReference>
<dbReference type="GO" id="GO:0005737">
    <property type="term" value="C:cytoplasm"/>
    <property type="evidence" value="ECO:0007669"/>
    <property type="project" value="UniProtKB-SubCell"/>
</dbReference>
<dbReference type="GO" id="GO:0047429">
    <property type="term" value="F:nucleoside triphosphate diphosphatase activity"/>
    <property type="evidence" value="ECO:0007669"/>
    <property type="project" value="InterPro"/>
</dbReference>
<dbReference type="GO" id="GO:0009117">
    <property type="term" value="P:nucleotide metabolic process"/>
    <property type="evidence" value="ECO:0007669"/>
    <property type="project" value="UniProtKB-KW"/>
</dbReference>
<dbReference type="CDD" id="cd00555">
    <property type="entry name" value="Maf"/>
    <property type="match status" value="1"/>
</dbReference>
<dbReference type="FunFam" id="3.90.950.10:FF:000005">
    <property type="entry name" value="7-methyl-GTP pyrophosphatase"/>
    <property type="match status" value="1"/>
</dbReference>
<dbReference type="Gene3D" id="3.90.950.10">
    <property type="match status" value="1"/>
</dbReference>
<dbReference type="HAMAP" id="MF_00528">
    <property type="entry name" value="Maf"/>
    <property type="match status" value="1"/>
</dbReference>
<dbReference type="InterPro" id="IPR029001">
    <property type="entry name" value="ITPase-like_fam"/>
</dbReference>
<dbReference type="InterPro" id="IPR003697">
    <property type="entry name" value="Maf-like"/>
</dbReference>
<dbReference type="NCBIfam" id="TIGR00172">
    <property type="entry name" value="maf"/>
    <property type="match status" value="1"/>
</dbReference>
<dbReference type="PANTHER" id="PTHR43213:SF10">
    <property type="entry name" value="7-METHYL-GTP PYROPHOSPHATASE"/>
    <property type="match status" value="1"/>
</dbReference>
<dbReference type="PANTHER" id="PTHR43213">
    <property type="entry name" value="BIFUNCTIONAL DTTP/UTP PYROPHOSPHATASE/METHYLTRANSFERASE PROTEIN-RELATED"/>
    <property type="match status" value="1"/>
</dbReference>
<dbReference type="Pfam" id="PF02545">
    <property type="entry name" value="Maf"/>
    <property type="match status" value="1"/>
</dbReference>
<dbReference type="PIRSF" id="PIRSF006305">
    <property type="entry name" value="Maf"/>
    <property type="match status" value="1"/>
</dbReference>
<dbReference type="SUPFAM" id="SSF52972">
    <property type="entry name" value="ITPase-like"/>
    <property type="match status" value="1"/>
</dbReference>
<evidence type="ECO:0000255" key="1">
    <source>
        <dbReference type="HAMAP-Rule" id="MF_00528"/>
    </source>
</evidence>